<protein>
    <recommendedName>
        <fullName evidence="1">Large ribosomal subunit protein bL17</fullName>
    </recommendedName>
    <alternativeName>
        <fullName evidence="2">50S ribosomal protein L17</fullName>
    </alternativeName>
</protein>
<evidence type="ECO:0000255" key="1">
    <source>
        <dbReference type="HAMAP-Rule" id="MF_01368"/>
    </source>
</evidence>
<evidence type="ECO:0000305" key="2"/>
<sequence>MRHRKSGRQLNRNSSHRQALFRNLASALVSHEIIKTTLPKAKELRRVVEPLITLAKVDSVANRRLAFARTRNIETVAKLFNELGPRFAQRAGGYTRILKCGFRAGDNAPMAYIELVDRPALAEEAKTE</sequence>
<accession>B0UX40</accession>
<reference key="1">
    <citation type="submission" date="2008-02" db="EMBL/GenBank/DDBJ databases">
        <title>Complete sequence of Haemophilus somnus 2336.</title>
        <authorList>
            <consortium name="US DOE Joint Genome Institute"/>
            <person name="Siddaramappa S."/>
            <person name="Duncan A.J."/>
            <person name="Challacombe J.F."/>
            <person name="Rainey D."/>
            <person name="Gillaspy A.F."/>
            <person name="Carson M."/>
            <person name="Gipson J."/>
            <person name="Gipson M."/>
            <person name="Bruce D."/>
            <person name="Detter J.C."/>
            <person name="Han C.S."/>
            <person name="Land M."/>
            <person name="Tapia R."/>
            <person name="Thompson L.S."/>
            <person name="Orvis J."/>
            <person name="Zaitshik J."/>
            <person name="Barnes G."/>
            <person name="Brettin T.S."/>
            <person name="Dyer D.W."/>
            <person name="Inzana T.J."/>
        </authorList>
    </citation>
    <scope>NUCLEOTIDE SEQUENCE [LARGE SCALE GENOMIC DNA]</scope>
    <source>
        <strain>2336</strain>
    </source>
</reference>
<comment type="subunit">
    <text evidence="1">Part of the 50S ribosomal subunit. Contacts protein L32.</text>
</comment>
<comment type="similarity">
    <text evidence="1">Belongs to the bacterial ribosomal protein bL17 family.</text>
</comment>
<keyword id="KW-0687">Ribonucleoprotein</keyword>
<keyword id="KW-0689">Ribosomal protein</keyword>
<gene>
    <name evidence="1" type="primary">rplQ</name>
    <name type="ordered locus">HSM_1979</name>
</gene>
<proteinExistence type="inferred from homology"/>
<organism>
    <name type="scientific">Histophilus somni (strain 2336)</name>
    <name type="common">Haemophilus somnus</name>
    <dbReference type="NCBI Taxonomy" id="228400"/>
    <lineage>
        <taxon>Bacteria</taxon>
        <taxon>Pseudomonadati</taxon>
        <taxon>Pseudomonadota</taxon>
        <taxon>Gammaproteobacteria</taxon>
        <taxon>Pasteurellales</taxon>
        <taxon>Pasteurellaceae</taxon>
        <taxon>Histophilus</taxon>
    </lineage>
</organism>
<name>RL17_HISS2</name>
<dbReference type="EMBL" id="CP000947">
    <property type="protein sequence ID" value="ACA31775.1"/>
    <property type="molecule type" value="Genomic_DNA"/>
</dbReference>
<dbReference type="RefSeq" id="WP_011608240.1">
    <property type="nucleotide sequence ID" value="NC_010519.1"/>
</dbReference>
<dbReference type="SMR" id="B0UX40"/>
<dbReference type="STRING" id="228400.HSM_1979"/>
<dbReference type="GeneID" id="31488290"/>
<dbReference type="KEGG" id="hsm:HSM_1979"/>
<dbReference type="HOGENOM" id="CLU_074407_2_0_6"/>
<dbReference type="GO" id="GO:0022625">
    <property type="term" value="C:cytosolic large ribosomal subunit"/>
    <property type="evidence" value="ECO:0007669"/>
    <property type="project" value="TreeGrafter"/>
</dbReference>
<dbReference type="GO" id="GO:0003735">
    <property type="term" value="F:structural constituent of ribosome"/>
    <property type="evidence" value="ECO:0007669"/>
    <property type="project" value="InterPro"/>
</dbReference>
<dbReference type="GO" id="GO:0006412">
    <property type="term" value="P:translation"/>
    <property type="evidence" value="ECO:0007669"/>
    <property type="project" value="UniProtKB-UniRule"/>
</dbReference>
<dbReference type="FunFam" id="3.90.1030.10:FF:000001">
    <property type="entry name" value="50S ribosomal protein L17"/>
    <property type="match status" value="1"/>
</dbReference>
<dbReference type="Gene3D" id="3.90.1030.10">
    <property type="entry name" value="Ribosomal protein L17"/>
    <property type="match status" value="1"/>
</dbReference>
<dbReference type="HAMAP" id="MF_01368">
    <property type="entry name" value="Ribosomal_bL17"/>
    <property type="match status" value="1"/>
</dbReference>
<dbReference type="InterPro" id="IPR000456">
    <property type="entry name" value="Ribosomal_bL17"/>
</dbReference>
<dbReference type="InterPro" id="IPR047859">
    <property type="entry name" value="Ribosomal_bL17_CS"/>
</dbReference>
<dbReference type="InterPro" id="IPR036373">
    <property type="entry name" value="Ribosomal_bL17_sf"/>
</dbReference>
<dbReference type="NCBIfam" id="TIGR00059">
    <property type="entry name" value="L17"/>
    <property type="match status" value="1"/>
</dbReference>
<dbReference type="PANTHER" id="PTHR14413:SF16">
    <property type="entry name" value="LARGE RIBOSOMAL SUBUNIT PROTEIN BL17M"/>
    <property type="match status" value="1"/>
</dbReference>
<dbReference type="PANTHER" id="PTHR14413">
    <property type="entry name" value="RIBOSOMAL PROTEIN L17"/>
    <property type="match status" value="1"/>
</dbReference>
<dbReference type="Pfam" id="PF01196">
    <property type="entry name" value="Ribosomal_L17"/>
    <property type="match status" value="1"/>
</dbReference>
<dbReference type="SUPFAM" id="SSF64263">
    <property type="entry name" value="Prokaryotic ribosomal protein L17"/>
    <property type="match status" value="1"/>
</dbReference>
<dbReference type="PROSITE" id="PS01167">
    <property type="entry name" value="RIBOSOMAL_L17"/>
    <property type="match status" value="1"/>
</dbReference>
<feature type="chain" id="PRO_1000087176" description="Large ribosomal subunit protein bL17">
    <location>
        <begin position="1"/>
        <end position="128"/>
    </location>
</feature>